<accession>A3MKD3</accession>
<evidence type="ECO:0000255" key="1">
    <source>
        <dbReference type="HAMAP-Rule" id="MF_00503"/>
    </source>
</evidence>
<evidence type="ECO:0000305" key="2"/>
<sequence>MQIILLEKVANLGNLGDIVKVKDGYARNFLIPNRKARRATKDAIAEFEVRRAELEKVAAEKLAAAQAVGEKLNGQTFEITQKSGVDGRLFGSVTNGDVAELLKKAGYEIEKAQVRMPEGPLKMIGEHGVQVALHTDVVVDVTVNVIGDHA</sequence>
<proteinExistence type="inferred from homology"/>
<gene>
    <name evidence="1" type="primary">rplI</name>
    <name type="ordered locus">BMA10247_1165</name>
</gene>
<comment type="function">
    <text evidence="1">Binds to the 23S rRNA.</text>
</comment>
<comment type="similarity">
    <text evidence="1">Belongs to the bacterial ribosomal protein bL9 family.</text>
</comment>
<reference key="1">
    <citation type="journal article" date="2010" name="Genome Biol. Evol.">
        <title>Continuing evolution of Burkholderia mallei through genome reduction and large-scale rearrangements.</title>
        <authorList>
            <person name="Losada L."/>
            <person name="Ronning C.M."/>
            <person name="DeShazer D."/>
            <person name="Woods D."/>
            <person name="Fedorova N."/>
            <person name="Kim H.S."/>
            <person name="Shabalina S.A."/>
            <person name="Pearson T.R."/>
            <person name="Brinkac L."/>
            <person name="Tan P."/>
            <person name="Nandi T."/>
            <person name="Crabtree J."/>
            <person name="Badger J."/>
            <person name="Beckstrom-Sternberg S."/>
            <person name="Saqib M."/>
            <person name="Schutzer S.E."/>
            <person name="Keim P."/>
            <person name="Nierman W.C."/>
        </authorList>
    </citation>
    <scope>NUCLEOTIDE SEQUENCE [LARGE SCALE GENOMIC DNA]</scope>
    <source>
        <strain>NCTC 10247</strain>
    </source>
</reference>
<dbReference type="EMBL" id="CP000548">
    <property type="protein sequence ID" value="ABO05581.1"/>
    <property type="molecule type" value="Genomic_DNA"/>
</dbReference>
<dbReference type="RefSeq" id="WP_004191711.1">
    <property type="nucleotide sequence ID" value="NZ_CP007802.1"/>
</dbReference>
<dbReference type="SMR" id="A3MKD3"/>
<dbReference type="GeneID" id="93060530"/>
<dbReference type="KEGG" id="bmaz:BM44_1939"/>
<dbReference type="KEGG" id="bmn:BMA10247_1165"/>
<dbReference type="PATRIC" id="fig|320389.8.peg.2176"/>
<dbReference type="GO" id="GO:1990904">
    <property type="term" value="C:ribonucleoprotein complex"/>
    <property type="evidence" value="ECO:0007669"/>
    <property type="project" value="UniProtKB-KW"/>
</dbReference>
<dbReference type="GO" id="GO:0005840">
    <property type="term" value="C:ribosome"/>
    <property type="evidence" value="ECO:0007669"/>
    <property type="project" value="UniProtKB-KW"/>
</dbReference>
<dbReference type="GO" id="GO:0019843">
    <property type="term" value="F:rRNA binding"/>
    <property type="evidence" value="ECO:0007669"/>
    <property type="project" value="UniProtKB-UniRule"/>
</dbReference>
<dbReference type="GO" id="GO:0003735">
    <property type="term" value="F:structural constituent of ribosome"/>
    <property type="evidence" value="ECO:0007669"/>
    <property type="project" value="InterPro"/>
</dbReference>
<dbReference type="GO" id="GO:0006412">
    <property type="term" value="P:translation"/>
    <property type="evidence" value="ECO:0007669"/>
    <property type="project" value="UniProtKB-UniRule"/>
</dbReference>
<dbReference type="Gene3D" id="3.10.430.100">
    <property type="entry name" value="Ribosomal protein L9, C-terminal domain"/>
    <property type="match status" value="1"/>
</dbReference>
<dbReference type="Gene3D" id="3.40.5.10">
    <property type="entry name" value="Ribosomal protein L9, N-terminal domain"/>
    <property type="match status" value="1"/>
</dbReference>
<dbReference type="HAMAP" id="MF_00503">
    <property type="entry name" value="Ribosomal_bL9"/>
    <property type="match status" value="1"/>
</dbReference>
<dbReference type="InterPro" id="IPR000244">
    <property type="entry name" value="Ribosomal_bL9"/>
</dbReference>
<dbReference type="InterPro" id="IPR009027">
    <property type="entry name" value="Ribosomal_bL9/RNase_H1_N"/>
</dbReference>
<dbReference type="InterPro" id="IPR020594">
    <property type="entry name" value="Ribosomal_bL9_bac/chp"/>
</dbReference>
<dbReference type="InterPro" id="IPR020069">
    <property type="entry name" value="Ribosomal_bL9_C"/>
</dbReference>
<dbReference type="InterPro" id="IPR036791">
    <property type="entry name" value="Ribosomal_bL9_C_sf"/>
</dbReference>
<dbReference type="InterPro" id="IPR020070">
    <property type="entry name" value="Ribosomal_bL9_N"/>
</dbReference>
<dbReference type="InterPro" id="IPR036935">
    <property type="entry name" value="Ribosomal_bL9_N_sf"/>
</dbReference>
<dbReference type="NCBIfam" id="TIGR00158">
    <property type="entry name" value="L9"/>
    <property type="match status" value="1"/>
</dbReference>
<dbReference type="PANTHER" id="PTHR21368">
    <property type="entry name" value="50S RIBOSOMAL PROTEIN L9"/>
    <property type="match status" value="1"/>
</dbReference>
<dbReference type="Pfam" id="PF03948">
    <property type="entry name" value="Ribosomal_L9_C"/>
    <property type="match status" value="1"/>
</dbReference>
<dbReference type="Pfam" id="PF01281">
    <property type="entry name" value="Ribosomal_L9_N"/>
    <property type="match status" value="1"/>
</dbReference>
<dbReference type="SUPFAM" id="SSF55658">
    <property type="entry name" value="L9 N-domain-like"/>
    <property type="match status" value="1"/>
</dbReference>
<dbReference type="SUPFAM" id="SSF55653">
    <property type="entry name" value="Ribosomal protein L9 C-domain"/>
    <property type="match status" value="1"/>
</dbReference>
<dbReference type="PROSITE" id="PS00651">
    <property type="entry name" value="RIBOSOMAL_L9"/>
    <property type="match status" value="1"/>
</dbReference>
<name>RL9_BURM7</name>
<keyword id="KW-0687">Ribonucleoprotein</keyword>
<keyword id="KW-0689">Ribosomal protein</keyword>
<keyword id="KW-0694">RNA-binding</keyword>
<keyword id="KW-0699">rRNA-binding</keyword>
<feature type="chain" id="PRO_1000014751" description="Large ribosomal subunit protein bL9">
    <location>
        <begin position="1"/>
        <end position="150"/>
    </location>
</feature>
<protein>
    <recommendedName>
        <fullName evidence="1">Large ribosomal subunit protein bL9</fullName>
    </recommendedName>
    <alternativeName>
        <fullName evidence="2">50S ribosomal protein L9</fullName>
    </alternativeName>
</protein>
<organism>
    <name type="scientific">Burkholderia mallei (strain NCTC 10247)</name>
    <dbReference type="NCBI Taxonomy" id="320389"/>
    <lineage>
        <taxon>Bacteria</taxon>
        <taxon>Pseudomonadati</taxon>
        <taxon>Pseudomonadota</taxon>
        <taxon>Betaproteobacteria</taxon>
        <taxon>Burkholderiales</taxon>
        <taxon>Burkholderiaceae</taxon>
        <taxon>Burkholderia</taxon>
        <taxon>pseudomallei group</taxon>
    </lineage>
</organism>